<sequence length="131" mass="14904">MAASLPHPKIVKKHTKKFKRHHSDRYHRVAENWRKQKGIDSVVRRRFRGQISEPTIGYGSNKKTRFMTPSGHKTYLVSNIKDLEVLMMHTKTYAAEIASNVSSKNRVSILARAKALGIKVTNPKGRLALEA</sequence>
<name>RL32_EREGS</name>
<accession>Q751I7</accession>
<comment type="similarity">
    <text evidence="1">Belongs to the eukaryotic ribosomal protein eL32 family.</text>
</comment>
<evidence type="ECO:0000305" key="1"/>
<proteinExistence type="inferred from homology"/>
<reference key="1">
    <citation type="journal article" date="2004" name="Science">
        <title>The Ashbya gossypii genome as a tool for mapping the ancient Saccharomyces cerevisiae genome.</title>
        <authorList>
            <person name="Dietrich F.S."/>
            <person name="Voegeli S."/>
            <person name="Brachat S."/>
            <person name="Lerch A."/>
            <person name="Gates K."/>
            <person name="Steiner S."/>
            <person name="Mohr C."/>
            <person name="Poehlmann R."/>
            <person name="Luedi P."/>
            <person name="Choi S."/>
            <person name="Wing R.A."/>
            <person name="Flavier A."/>
            <person name="Gaffney T.D."/>
            <person name="Philippsen P."/>
        </authorList>
    </citation>
    <scope>NUCLEOTIDE SEQUENCE [LARGE SCALE GENOMIC DNA]</scope>
    <source>
        <strain>ATCC 10895 / CBS 109.51 / FGSC 9923 / NRRL Y-1056</strain>
    </source>
</reference>
<reference key="2">
    <citation type="journal article" date="2013" name="G3 (Bethesda)">
        <title>Genomes of Ashbya fungi isolated from insects reveal four mating-type loci, numerous translocations, lack of transposons, and distinct gene duplications.</title>
        <authorList>
            <person name="Dietrich F.S."/>
            <person name="Voegeli S."/>
            <person name="Kuo S."/>
            <person name="Philippsen P."/>
        </authorList>
    </citation>
    <scope>GENOME REANNOTATION</scope>
    <source>
        <strain>ATCC 10895 / CBS 109.51 / FGSC 9923 / NRRL Y-1056</strain>
    </source>
</reference>
<protein>
    <recommendedName>
        <fullName evidence="1">Large ribosomal subunit protein eL32</fullName>
    </recommendedName>
    <alternativeName>
        <fullName>60S ribosomal protein L32</fullName>
    </alternativeName>
</protein>
<gene>
    <name type="primary">RPL32</name>
    <name type="ordered locus">AGL281C</name>
</gene>
<feature type="chain" id="PRO_0000131138" description="Large ribosomal subunit protein eL32">
    <location>
        <begin position="1"/>
        <end position="131"/>
    </location>
</feature>
<dbReference type="EMBL" id="AE016820">
    <property type="protein sequence ID" value="AAS54210.1"/>
    <property type="molecule type" value="Genomic_DNA"/>
</dbReference>
<dbReference type="RefSeq" id="NP_986386.1">
    <property type="nucleotide sequence ID" value="NM_211448.2"/>
</dbReference>
<dbReference type="SMR" id="Q751I7"/>
<dbReference type="FunCoup" id="Q751I7">
    <property type="interactions" value="1029"/>
</dbReference>
<dbReference type="STRING" id="284811.Q751I7"/>
<dbReference type="EnsemblFungi" id="AAS54210">
    <property type="protein sequence ID" value="AAS54210"/>
    <property type="gene ID" value="AGOS_AGL281C"/>
</dbReference>
<dbReference type="GeneID" id="4622679"/>
<dbReference type="KEGG" id="ago:AGOS_AGL281C"/>
<dbReference type="eggNOG" id="KOG0878">
    <property type="taxonomic scope" value="Eukaryota"/>
</dbReference>
<dbReference type="HOGENOM" id="CLU_071479_4_0_1"/>
<dbReference type="InParanoid" id="Q751I7"/>
<dbReference type="OMA" id="GPHNTAK"/>
<dbReference type="OrthoDB" id="268693at2759"/>
<dbReference type="Proteomes" id="UP000000591">
    <property type="component" value="Chromosome VII"/>
</dbReference>
<dbReference type="GO" id="GO:0022625">
    <property type="term" value="C:cytosolic large ribosomal subunit"/>
    <property type="evidence" value="ECO:0000318"/>
    <property type="project" value="GO_Central"/>
</dbReference>
<dbReference type="GO" id="GO:0003735">
    <property type="term" value="F:structural constituent of ribosome"/>
    <property type="evidence" value="ECO:0007669"/>
    <property type="project" value="InterPro"/>
</dbReference>
<dbReference type="GO" id="GO:0006412">
    <property type="term" value="P:translation"/>
    <property type="evidence" value="ECO:0007669"/>
    <property type="project" value="InterPro"/>
</dbReference>
<dbReference type="CDD" id="cd00513">
    <property type="entry name" value="Ribosomal_L32_L32e"/>
    <property type="match status" value="1"/>
</dbReference>
<dbReference type="InterPro" id="IPR001515">
    <property type="entry name" value="Ribosomal_eL32"/>
</dbReference>
<dbReference type="InterPro" id="IPR018263">
    <property type="entry name" value="Ribosomal_eL32_CS"/>
</dbReference>
<dbReference type="InterPro" id="IPR036351">
    <property type="entry name" value="Ribosomal_eL32_sf"/>
</dbReference>
<dbReference type="PANTHER" id="PTHR23413">
    <property type="entry name" value="60S RIBOSOMAL PROTEIN L32 AND DNA-DIRECTED RNA POLYMERASE II, SUBUNIT N"/>
    <property type="match status" value="1"/>
</dbReference>
<dbReference type="PANTHER" id="PTHR23413:SF1">
    <property type="entry name" value="RIBOSOMAL PROTEIN L32"/>
    <property type="match status" value="1"/>
</dbReference>
<dbReference type="Pfam" id="PF01655">
    <property type="entry name" value="Ribosomal_L32e"/>
    <property type="match status" value="1"/>
</dbReference>
<dbReference type="SMART" id="SM01393">
    <property type="entry name" value="Ribosomal_L32e"/>
    <property type="match status" value="1"/>
</dbReference>
<dbReference type="SUPFAM" id="SSF52042">
    <property type="entry name" value="Ribosomal protein L32e"/>
    <property type="match status" value="1"/>
</dbReference>
<dbReference type="PROSITE" id="PS00580">
    <property type="entry name" value="RIBOSOMAL_L32E"/>
    <property type="match status" value="1"/>
</dbReference>
<keyword id="KW-1185">Reference proteome</keyword>
<keyword id="KW-0687">Ribonucleoprotein</keyword>
<keyword id="KW-0689">Ribosomal protein</keyword>
<organism>
    <name type="scientific">Eremothecium gossypii (strain ATCC 10895 / CBS 109.51 / FGSC 9923 / NRRL Y-1056)</name>
    <name type="common">Yeast</name>
    <name type="synonym">Ashbya gossypii</name>
    <dbReference type="NCBI Taxonomy" id="284811"/>
    <lineage>
        <taxon>Eukaryota</taxon>
        <taxon>Fungi</taxon>
        <taxon>Dikarya</taxon>
        <taxon>Ascomycota</taxon>
        <taxon>Saccharomycotina</taxon>
        <taxon>Saccharomycetes</taxon>
        <taxon>Saccharomycetales</taxon>
        <taxon>Saccharomycetaceae</taxon>
        <taxon>Eremothecium</taxon>
    </lineage>
</organism>